<reference evidence="7" key="1">
    <citation type="journal article" date="2009" name="PLoS Genet.">
        <title>Genomic analysis of the basal lineage fungus Rhizopus oryzae reveals a whole-genome duplication.</title>
        <authorList>
            <person name="Ma L.-J."/>
            <person name="Ibrahim A.S."/>
            <person name="Skory C."/>
            <person name="Grabherr M.G."/>
            <person name="Burger G."/>
            <person name="Butler M."/>
            <person name="Elias M."/>
            <person name="Idnurm A."/>
            <person name="Lang B.F."/>
            <person name="Sone T."/>
            <person name="Abe A."/>
            <person name="Calvo S.E."/>
            <person name="Corrochano L.M."/>
            <person name="Engels R."/>
            <person name="Fu J."/>
            <person name="Hansberg W."/>
            <person name="Kim J.-M."/>
            <person name="Kodira C.D."/>
            <person name="Koehrsen M.J."/>
            <person name="Liu B."/>
            <person name="Miranda-Saavedra D."/>
            <person name="O'Leary S."/>
            <person name="Ortiz-Castellanos L."/>
            <person name="Poulter R."/>
            <person name="Rodriguez-Romero J."/>
            <person name="Ruiz-Herrera J."/>
            <person name="Shen Y.-Q."/>
            <person name="Zeng Q."/>
            <person name="Galagan J."/>
            <person name="Birren B.W."/>
            <person name="Cuomo C.A."/>
            <person name="Wickes B.L."/>
        </authorList>
    </citation>
    <scope>NUCLEOTIDE SEQUENCE [LARGE SCALE GENOMIC DNA]</scope>
    <source>
        <strain evidence="7">RA 99-880 / ATCC MYA-4621 / FGSC 9543 / NRRL 43880</strain>
    </source>
</reference>
<reference evidence="4" key="2">
    <citation type="journal article" date="2021" name="Nat. Microbiol.">
        <title>Mucoricin is a ricin-like toxin that is critical for the pathogenesis of mucormycosis.</title>
        <authorList>
            <person name="Soliman S.S.M."/>
            <person name="Baldin C."/>
            <person name="Gu Y."/>
            <person name="Singh S."/>
            <person name="Gebremariam T."/>
            <person name="Swidergall M."/>
            <person name="Alqarihi A."/>
            <person name="Youssef E.G."/>
            <person name="Alkhazraji S."/>
            <person name="Pikoulas A."/>
            <person name="Perske C."/>
            <person name="Venkataramani V."/>
            <person name="Rich A."/>
            <person name="Bruno V.M."/>
            <person name="Hotopp J.D."/>
            <person name="Mantis N.J."/>
            <person name="Edwards J.E. Jr."/>
            <person name="Filler S.G."/>
            <person name="Chamilos G."/>
            <person name="Vitetta E.S."/>
            <person name="Ibrahim A.S."/>
        </authorList>
    </citation>
    <scope>FUNCTION</scope>
    <scope>CATALYTIC ACTIVITY</scope>
    <scope>SUBCELLULAR LOCATION</scope>
    <scope>DEVELOPMENTAL STAGE</scope>
    <scope>INDUCTION</scope>
    <scope>DISRUPTION PHENOTYPE</scope>
    <scope>BIOTECHNOLOGY</scope>
</reference>
<keyword id="KW-0378">Hydrolase</keyword>
<keyword id="KW-0652">Protein synthesis inhibitor</keyword>
<keyword id="KW-1185">Reference proteome</keyword>
<keyword id="KW-0964">Secreted</keyword>
<keyword id="KW-0800">Toxin</keyword>
<keyword id="KW-0843">Virulence</keyword>
<proteinExistence type="evidence at protein level"/>
<protein>
    <recommendedName>
        <fullName evidence="3">Mucoricin</fullName>
        <ecNumber evidence="2">3.2.2.22</ecNumber>
    </recommendedName>
    <alternativeName>
        <fullName evidence="3">Ricin-like toxin</fullName>
    </alternativeName>
    <alternativeName>
        <fullName evidence="4">rRNA N-glycosidase</fullName>
    </alternativeName>
</protein>
<dbReference type="EC" id="3.2.2.22" evidence="2"/>
<dbReference type="EMBL" id="CH476735">
    <property type="protein sequence ID" value="EIE81863.1"/>
    <property type="molecule type" value="Genomic_DNA"/>
</dbReference>
<dbReference type="SMR" id="I1C083"/>
<dbReference type="STRING" id="246409.I1C083"/>
<dbReference type="VEuPathDB" id="FungiDB:RO3G_06568"/>
<dbReference type="eggNOG" id="ENOG502SDNC">
    <property type="taxonomic scope" value="Eukaryota"/>
</dbReference>
<dbReference type="InParanoid" id="I1C083"/>
<dbReference type="OMA" id="DGYFINA"/>
<dbReference type="OrthoDB" id="34180at4827"/>
<dbReference type="Proteomes" id="UP000009138">
    <property type="component" value="Unassembled WGS sequence"/>
</dbReference>
<dbReference type="GO" id="GO:0005576">
    <property type="term" value="C:extracellular region"/>
    <property type="evidence" value="ECO:0000314"/>
    <property type="project" value="UniProtKB"/>
</dbReference>
<dbReference type="GO" id="GO:0030598">
    <property type="term" value="F:rRNA N-glycosylase activity"/>
    <property type="evidence" value="ECO:0000314"/>
    <property type="project" value="UniProtKB"/>
</dbReference>
<dbReference type="GO" id="GO:0090729">
    <property type="term" value="F:toxin activity"/>
    <property type="evidence" value="ECO:0000314"/>
    <property type="project" value="UniProtKB"/>
</dbReference>
<dbReference type="GO" id="GO:0045007">
    <property type="term" value="P:depurination"/>
    <property type="evidence" value="ECO:0000314"/>
    <property type="project" value="UniProtKB"/>
</dbReference>
<dbReference type="GO" id="GO:0017148">
    <property type="term" value="P:negative regulation of translation"/>
    <property type="evidence" value="ECO:0007669"/>
    <property type="project" value="UniProtKB-KW"/>
</dbReference>
<dbReference type="GO" id="GO:0019057">
    <property type="term" value="P:symbiont-mediated perturbation of host translation"/>
    <property type="evidence" value="ECO:0000305"/>
    <property type="project" value="UniProtKB"/>
</dbReference>
<dbReference type="CDD" id="cd23454">
    <property type="entry name" value="beta-trefoil_Ricin_GllA-1"/>
    <property type="match status" value="1"/>
</dbReference>
<dbReference type="Gene3D" id="2.80.10.50">
    <property type="match status" value="1"/>
</dbReference>
<dbReference type="InterPro" id="IPR035992">
    <property type="entry name" value="Ricin_B-like_lectins"/>
</dbReference>
<dbReference type="InterPro" id="IPR000772">
    <property type="entry name" value="Ricin_B_lectin"/>
</dbReference>
<dbReference type="Pfam" id="PF00652">
    <property type="entry name" value="Ricin_B_lectin"/>
    <property type="match status" value="1"/>
</dbReference>
<dbReference type="SMART" id="SM00458">
    <property type="entry name" value="RICIN"/>
    <property type="match status" value="1"/>
</dbReference>
<dbReference type="SUPFAM" id="SSF50370">
    <property type="entry name" value="Ricin B-like lectins"/>
    <property type="match status" value="1"/>
</dbReference>
<dbReference type="PROSITE" id="PS50231">
    <property type="entry name" value="RICIN_B_LECTIN"/>
    <property type="match status" value="1"/>
</dbReference>
<evidence type="ECO:0000255" key="1">
    <source>
        <dbReference type="PROSITE-ProRule" id="PRU00174"/>
    </source>
</evidence>
<evidence type="ECO:0000269" key="2">
    <source>
    </source>
</evidence>
<evidence type="ECO:0000303" key="3">
    <source>
    </source>
</evidence>
<evidence type="ECO:0000305" key="4"/>
<evidence type="ECO:0000305" key="5">
    <source>
    </source>
</evidence>
<evidence type="ECO:0000312" key="6">
    <source>
        <dbReference type="EMBL" id="EIE81863.1"/>
    </source>
</evidence>
<evidence type="ECO:0000312" key="7">
    <source>
        <dbReference type="Proteomes" id="UP000009138"/>
    </source>
</evidence>
<gene>
    <name evidence="3" type="primary">RLT1</name>
    <name evidence="6" type="ORF">RO3G_06568</name>
</gene>
<comment type="function">
    <text evidence="2">N-glycosylase that inhibits protein synthesis in the host by depurinating ribosomal rRNA, and thus acts as a ribosomal inactivating protein (RIP) (PubMed:33462434). Promotes vascular permeability in the host and induces necrosis and apoptosis of host alveolar epithelial cells (PubMed:33462434).</text>
</comment>
<comment type="catalytic activity">
    <reaction evidence="2">
        <text>Endohydrolysis of the N-glycosidic bond at one specific adenosine on the 28S rRNA.</text>
        <dbReference type="EC" id="3.2.2.22"/>
    </reaction>
</comment>
<comment type="subcellular location">
    <subcellularLocation>
        <location evidence="2">Secreted</location>
    </subcellularLocation>
</comment>
<comment type="developmental stage">
    <text evidence="2">Induced during germination and expressed during hyphal growth (at protein level) (PubMed:33462434). Not expressed in spores (at protein level) (PubMed:33462434).</text>
</comment>
<comment type="induction">
    <text evidence="2">Repressed by hypoxic conditions.</text>
</comment>
<comment type="disruption phenotype">
    <text evidence="2">RNAi-mediated knockdown decreases cytotoxicity in vitro and decreases virulence in a mouse model of infection (PubMed:33462434). RNAi-mediated knockdown has no effect on the germination or cell population growth of the fungus (PubMed:33462434).</text>
</comment>
<comment type="biotechnology">
    <text evidence="5">Antibodies against the toxin protects mice from mucormycosis and thus could potentially be used to treat the disease.</text>
</comment>
<comment type="similarity">
    <text evidence="4">Belongs to the ribosome-inactivating protein family. Type 1 RIP subfamily.</text>
</comment>
<accession>I1C083</accession>
<name>RLT1_RHIO9</name>
<feature type="chain" id="PRO_0000453624" description="Mucoricin">
    <location>
        <begin position="1"/>
        <end position="147"/>
    </location>
</feature>
<feature type="domain" description="Ricin B-type lectin" evidence="1">
    <location>
        <begin position="4"/>
        <end position="143"/>
    </location>
</feature>
<sequence length="147" mass="17138">MYFEEGRLFFIKSQFNGRVLDVEDGSTEDDANIIVYTQKYEDCLNQLWRYENGYFINAKSAKVLDIRGGEMQPESQIIQYAQKMVEEAANQRWAIDEDGYIFCEARPDLVLDIQGAEDEDCVPVILYERREGEVSANQRWELVPFEG</sequence>
<organism evidence="7">
    <name type="scientific">Rhizopus delemar (strain RA 99-880 / ATCC MYA-4621 / FGSC 9543 / NRRL 43880)</name>
    <name type="common">Mucormycosis agent</name>
    <name type="synonym">Rhizopus arrhizus var. delemar</name>
    <dbReference type="NCBI Taxonomy" id="246409"/>
    <lineage>
        <taxon>Eukaryota</taxon>
        <taxon>Fungi</taxon>
        <taxon>Fungi incertae sedis</taxon>
        <taxon>Mucoromycota</taxon>
        <taxon>Mucoromycotina</taxon>
        <taxon>Mucoromycetes</taxon>
        <taxon>Mucorales</taxon>
        <taxon>Mucorineae</taxon>
        <taxon>Rhizopodaceae</taxon>
        <taxon>Rhizopus</taxon>
    </lineage>
</organism>